<name>ADHX_BOVIN</name>
<comment type="function">
    <text evidence="1 2">Catalyzes the oxidation of long-chain primary alcohols and the oxidation of S-(hydroxymethyl) glutathione. Also oxidizes long chain omega-hydroxy fatty acids, such as 20-HETE, producing both the intermediate aldehyde, 20-oxoarachidonate and the end product, a dicarboxylic acid, (5Z,8Z,11Z,14Z)-eicosatetraenedioate. Class-III ADH is remarkably ineffective in oxidizing ethanol. Required for clearance of cellular formaldehyde, a cytotoxic and carcinogenic metabolite that induces DNA damage (By similarity). Also acts as a S-nitroso-glutathione reductase by catalyzing the NADH-dependent reduction of S-nitrosoglutathione, thereby regulating protein S-nitrosylation (By similarity).</text>
</comment>
<comment type="catalytic activity">
    <reaction evidence="1">
        <text>a primary alcohol + NAD(+) = an aldehyde + NADH + H(+)</text>
        <dbReference type="Rhea" id="RHEA:10736"/>
        <dbReference type="ChEBI" id="CHEBI:15378"/>
        <dbReference type="ChEBI" id="CHEBI:15734"/>
        <dbReference type="ChEBI" id="CHEBI:17478"/>
        <dbReference type="ChEBI" id="CHEBI:57540"/>
        <dbReference type="ChEBI" id="CHEBI:57945"/>
        <dbReference type="EC" id="1.1.1.1"/>
    </reaction>
</comment>
<comment type="catalytic activity">
    <reaction evidence="1">
        <text>a secondary alcohol + NAD(+) = a ketone + NADH + H(+)</text>
        <dbReference type="Rhea" id="RHEA:10740"/>
        <dbReference type="ChEBI" id="CHEBI:15378"/>
        <dbReference type="ChEBI" id="CHEBI:17087"/>
        <dbReference type="ChEBI" id="CHEBI:35681"/>
        <dbReference type="ChEBI" id="CHEBI:57540"/>
        <dbReference type="ChEBI" id="CHEBI:57945"/>
        <dbReference type="EC" id="1.1.1.1"/>
    </reaction>
</comment>
<comment type="catalytic activity">
    <reaction evidence="1">
        <text>S-(hydroxymethyl)glutathione + NADP(+) = S-formylglutathione + NADPH + H(+)</text>
        <dbReference type="Rhea" id="RHEA:19981"/>
        <dbReference type="ChEBI" id="CHEBI:15378"/>
        <dbReference type="ChEBI" id="CHEBI:57688"/>
        <dbReference type="ChEBI" id="CHEBI:57783"/>
        <dbReference type="ChEBI" id="CHEBI:58349"/>
        <dbReference type="ChEBI" id="CHEBI:58758"/>
        <dbReference type="EC" id="1.1.1.284"/>
    </reaction>
</comment>
<comment type="catalytic activity">
    <reaction evidence="1">
        <text>S-(hydroxymethyl)glutathione + NAD(+) = S-formylglutathione + NADH + H(+)</text>
        <dbReference type="Rhea" id="RHEA:19985"/>
        <dbReference type="ChEBI" id="CHEBI:15378"/>
        <dbReference type="ChEBI" id="CHEBI:57540"/>
        <dbReference type="ChEBI" id="CHEBI:57688"/>
        <dbReference type="ChEBI" id="CHEBI:57945"/>
        <dbReference type="ChEBI" id="CHEBI:58758"/>
        <dbReference type="EC" id="1.1.1.284"/>
    </reaction>
</comment>
<comment type="catalytic activity">
    <reaction evidence="1">
        <text>20-oxo-(5Z,8Z,11Z,14Z)-eicosatetraenoate + NAD(+) + H2O = (5Z,8Z,11Z,14Z)-eicosatetraenedioate + NADH + 2 H(+)</text>
        <dbReference type="Rhea" id="RHEA:39803"/>
        <dbReference type="ChEBI" id="CHEBI:15377"/>
        <dbReference type="ChEBI" id="CHEBI:15378"/>
        <dbReference type="ChEBI" id="CHEBI:57540"/>
        <dbReference type="ChEBI" id="CHEBI:57945"/>
        <dbReference type="ChEBI" id="CHEBI:76645"/>
        <dbReference type="ChEBI" id="CHEBI:76647"/>
    </reaction>
    <physiologicalReaction direction="left-to-right" evidence="1">
        <dbReference type="Rhea" id="RHEA:39804"/>
    </physiologicalReaction>
</comment>
<comment type="catalytic activity">
    <reaction evidence="1">
        <text>20-hydroxy-(5Z,8Z,11Z,14Z)-eicosatetraenoate + NAD(+) = 20-oxo-(5Z,8Z,11Z,14Z)-eicosatetraenoate + NADH + H(+)</text>
        <dbReference type="Rhea" id="RHEA:39799"/>
        <dbReference type="ChEBI" id="CHEBI:15378"/>
        <dbReference type="ChEBI" id="CHEBI:57540"/>
        <dbReference type="ChEBI" id="CHEBI:57945"/>
        <dbReference type="ChEBI" id="CHEBI:76624"/>
        <dbReference type="ChEBI" id="CHEBI:76645"/>
    </reaction>
    <physiologicalReaction direction="left-to-right" evidence="1">
        <dbReference type="Rhea" id="RHEA:39800"/>
    </physiologicalReaction>
</comment>
<comment type="catalytic activity">
    <reaction evidence="2">
        <text>S-nitrosoglutathione + NADH + H(+) = S-(hydroxysulfenamide)glutathione + NAD(+)</text>
        <dbReference type="Rhea" id="RHEA:78371"/>
        <dbReference type="ChEBI" id="CHEBI:15378"/>
        <dbReference type="ChEBI" id="CHEBI:57540"/>
        <dbReference type="ChEBI" id="CHEBI:57945"/>
        <dbReference type="ChEBI" id="CHEBI:145544"/>
        <dbReference type="ChEBI" id="CHEBI:229723"/>
    </reaction>
    <physiologicalReaction direction="left-to-right" evidence="2">
        <dbReference type="Rhea" id="RHEA:78372"/>
    </physiologicalReaction>
</comment>
<comment type="cofactor">
    <cofactor evidence="1">
        <name>Zn(2+)</name>
        <dbReference type="ChEBI" id="CHEBI:29105"/>
    </cofactor>
    <text evidence="1">Binds 2 Zn(2+) ions per subunit.</text>
</comment>
<comment type="subunit">
    <text evidence="1">Homodimer.</text>
</comment>
<comment type="subcellular location">
    <subcellularLocation>
        <location evidence="3">Cytoplasm</location>
    </subcellularLocation>
</comment>
<comment type="similarity">
    <text evidence="3">Belongs to the zinc-containing alcohol dehydrogenase family. Class-III subfamily.</text>
</comment>
<dbReference type="EC" id="1.1.1.1" evidence="1"/>
<dbReference type="EC" id="1.1.1.-"/>
<dbReference type="EC" id="1.1.1.284" evidence="1"/>
<dbReference type="EMBL" id="BC102926">
    <property type="protein sequence ID" value="AAI02927.1"/>
    <property type="molecule type" value="mRNA"/>
</dbReference>
<dbReference type="RefSeq" id="NP_001029421.1">
    <property type="nucleotide sequence ID" value="NM_001034249.2"/>
</dbReference>
<dbReference type="SMR" id="Q3ZC42"/>
<dbReference type="FunCoup" id="Q3ZC42">
    <property type="interactions" value="2632"/>
</dbReference>
<dbReference type="STRING" id="9913.ENSBTAP00000021304"/>
<dbReference type="PaxDb" id="9913-ENSBTAP00000021304"/>
<dbReference type="Ensembl" id="ENSBTAT00000021304.7">
    <property type="protein sequence ID" value="ENSBTAP00000021304.5"/>
    <property type="gene ID" value="ENSBTAG00000016007.7"/>
</dbReference>
<dbReference type="GeneID" id="505515"/>
<dbReference type="KEGG" id="bta:505515"/>
<dbReference type="CTD" id="128"/>
<dbReference type="VEuPathDB" id="HostDB:ENSBTAG00000016007"/>
<dbReference type="eggNOG" id="KOG0022">
    <property type="taxonomic scope" value="Eukaryota"/>
</dbReference>
<dbReference type="GeneTree" id="ENSGT00940000155196"/>
<dbReference type="HOGENOM" id="CLU_026673_14_0_1"/>
<dbReference type="InParanoid" id="Q3ZC42"/>
<dbReference type="OMA" id="IKGRSEM"/>
<dbReference type="OrthoDB" id="417550at2759"/>
<dbReference type="TreeFam" id="TF300429"/>
<dbReference type="Reactome" id="R-BTA-71384">
    <property type="pathway name" value="Ethanol oxidation"/>
</dbReference>
<dbReference type="SABIO-RK" id="Q3ZC42"/>
<dbReference type="Proteomes" id="UP000009136">
    <property type="component" value="Chromosome 6"/>
</dbReference>
<dbReference type="Bgee" id="ENSBTAG00000016007">
    <property type="expression patterns" value="Expressed in ruminant reticulum and 106 other cell types or tissues"/>
</dbReference>
<dbReference type="GO" id="GO:0005829">
    <property type="term" value="C:cytosol"/>
    <property type="evidence" value="ECO:0000318"/>
    <property type="project" value="GO_Central"/>
</dbReference>
<dbReference type="GO" id="GO:0005739">
    <property type="term" value="C:mitochondrion"/>
    <property type="evidence" value="ECO:0007669"/>
    <property type="project" value="Ensembl"/>
</dbReference>
<dbReference type="GO" id="GO:0004022">
    <property type="term" value="F:alcohol dehydrogenase (NAD+) activity"/>
    <property type="evidence" value="ECO:0000318"/>
    <property type="project" value="GO_Central"/>
</dbReference>
<dbReference type="GO" id="GO:0005504">
    <property type="term" value="F:fatty acid binding"/>
    <property type="evidence" value="ECO:0007669"/>
    <property type="project" value="Ensembl"/>
</dbReference>
<dbReference type="GO" id="GO:0018467">
    <property type="term" value="F:formaldehyde dehydrogenase (NAD+) activity"/>
    <property type="evidence" value="ECO:0007669"/>
    <property type="project" value="Ensembl"/>
</dbReference>
<dbReference type="GO" id="GO:0042802">
    <property type="term" value="F:identical protein binding"/>
    <property type="evidence" value="ECO:0007669"/>
    <property type="project" value="Ensembl"/>
</dbReference>
<dbReference type="GO" id="GO:0106322">
    <property type="term" value="F:S-(hydroxymethyl)glutathione dehydrogenase (NAD+) activity"/>
    <property type="evidence" value="ECO:0007669"/>
    <property type="project" value="RHEA"/>
</dbReference>
<dbReference type="GO" id="GO:0106321">
    <property type="term" value="F:S-(hydroxymethyl)glutathione dehydrogenase (NADP+) activity"/>
    <property type="evidence" value="ECO:0007669"/>
    <property type="project" value="RHEA"/>
</dbReference>
<dbReference type="GO" id="GO:0051903">
    <property type="term" value="F:S-(hydroxymethyl)glutathione dehydrogenase [NAD(P)+] activity"/>
    <property type="evidence" value="ECO:0000318"/>
    <property type="project" value="GO_Central"/>
</dbReference>
<dbReference type="GO" id="GO:0080007">
    <property type="term" value="F:S-nitrosoglutathione reductase (NADH) activity"/>
    <property type="evidence" value="ECO:0007669"/>
    <property type="project" value="RHEA"/>
</dbReference>
<dbReference type="GO" id="GO:0008270">
    <property type="term" value="F:zinc ion binding"/>
    <property type="evidence" value="ECO:0000318"/>
    <property type="project" value="GO_Central"/>
</dbReference>
<dbReference type="GO" id="GO:0010430">
    <property type="term" value="P:fatty acid omega-oxidation"/>
    <property type="evidence" value="ECO:0000250"/>
    <property type="project" value="UniProtKB"/>
</dbReference>
<dbReference type="GO" id="GO:0046294">
    <property type="term" value="P:formaldehyde catabolic process"/>
    <property type="evidence" value="ECO:0000318"/>
    <property type="project" value="GO_Central"/>
</dbReference>
<dbReference type="GO" id="GO:0045777">
    <property type="term" value="P:positive regulation of blood pressure"/>
    <property type="evidence" value="ECO:0007669"/>
    <property type="project" value="Ensembl"/>
</dbReference>
<dbReference type="GO" id="GO:0003016">
    <property type="term" value="P:respiratory system process"/>
    <property type="evidence" value="ECO:0007669"/>
    <property type="project" value="Ensembl"/>
</dbReference>
<dbReference type="GO" id="GO:0032496">
    <property type="term" value="P:response to lipopolysaccharide"/>
    <property type="evidence" value="ECO:0007669"/>
    <property type="project" value="Ensembl"/>
</dbReference>
<dbReference type="GO" id="GO:0051409">
    <property type="term" value="P:response to nitrosative stress"/>
    <property type="evidence" value="ECO:0007669"/>
    <property type="project" value="Ensembl"/>
</dbReference>
<dbReference type="GO" id="GO:0051775">
    <property type="term" value="P:response to redox state"/>
    <property type="evidence" value="ECO:0007669"/>
    <property type="project" value="Ensembl"/>
</dbReference>
<dbReference type="GO" id="GO:0001523">
    <property type="term" value="P:retinoid metabolic process"/>
    <property type="evidence" value="ECO:0007669"/>
    <property type="project" value="Ensembl"/>
</dbReference>
<dbReference type="CDD" id="cd08300">
    <property type="entry name" value="alcohol_DH_class_III"/>
    <property type="match status" value="1"/>
</dbReference>
<dbReference type="FunFam" id="3.40.50.720:FF:000003">
    <property type="entry name" value="S-(hydroxymethyl)glutathione dehydrogenase"/>
    <property type="match status" value="1"/>
</dbReference>
<dbReference type="FunFam" id="3.90.180.10:FF:000001">
    <property type="entry name" value="S-(hydroxymethyl)glutathione dehydrogenase"/>
    <property type="match status" value="1"/>
</dbReference>
<dbReference type="Gene3D" id="3.90.180.10">
    <property type="entry name" value="Medium-chain alcohol dehydrogenases, catalytic domain"/>
    <property type="match status" value="1"/>
</dbReference>
<dbReference type="Gene3D" id="3.40.50.720">
    <property type="entry name" value="NAD(P)-binding Rossmann-like Domain"/>
    <property type="match status" value="1"/>
</dbReference>
<dbReference type="InterPro" id="IPR013149">
    <property type="entry name" value="ADH-like_C"/>
</dbReference>
<dbReference type="InterPro" id="IPR013154">
    <property type="entry name" value="ADH-like_N"/>
</dbReference>
<dbReference type="InterPro" id="IPR014183">
    <property type="entry name" value="ADH_3"/>
</dbReference>
<dbReference type="InterPro" id="IPR002328">
    <property type="entry name" value="ADH_Zn_CS"/>
</dbReference>
<dbReference type="InterPro" id="IPR011032">
    <property type="entry name" value="GroES-like_sf"/>
</dbReference>
<dbReference type="InterPro" id="IPR036291">
    <property type="entry name" value="NAD(P)-bd_dom_sf"/>
</dbReference>
<dbReference type="InterPro" id="IPR020843">
    <property type="entry name" value="PKS_ER"/>
</dbReference>
<dbReference type="NCBIfam" id="TIGR02818">
    <property type="entry name" value="adh_III_F_hyde"/>
    <property type="match status" value="1"/>
</dbReference>
<dbReference type="PANTHER" id="PTHR43880">
    <property type="entry name" value="ALCOHOL DEHYDROGENASE"/>
    <property type="match status" value="1"/>
</dbReference>
<dbReference type="PANTHER" id="PTHR43880:SF4">
    <property type="entry name" value="ALCOHOL DEHYDROGENASE CLASS-3"/>
    <property type="match status" value="1"/>
</dbReference>
<dbReference type="Pfam" id="PF08240">
    <property type="entry name" value="ADH_N"/>
    <property type="match status" value="1"/>
</dbReference>
<dbReference type="Pfam" id="PF00107">
    <property type="entry name" value="ADH_zinc_N"/>
    <property type="match status" value="1"/>
</dbReference>
<dbReference type="SMART" id="SM00829">
    <property type="entry name" value="PKS_ER"/>
    <property type="match status" value="1"/>
</dbReference>
<dbReference type="SUPFAM" id="SSF50129">
    <property type="entry name" value="GroES-like"/>
    <property type="match status" value="2"/>
</dbReference>
<dbReference type="SUPFAM" id="SSF51735">
    <property type="entry name" value="NAD(P)-binding Rossmann-fold domains"/>
    <property type="match status" value="1"/>
</dbReference>
<dbReference type="PROSITE" id="PS00059">
    <property type="entry name" value="ADH_ZINC"/>
    <property type="match status" value="1"/>
</dbReference>
<accession>Q3ZC42</accession>
<evidence type="ECO:0000250" key="1">
    <source>
        <dbReference type="UniProtKB" id="P11766"/>
    </source>
</evidence>
<evidence type="ECO:0000250" key="2">
    <source>
        <dbReference type="UniProtKB" id="P28474"/>
    </source>
</evidence>
<evidence type="ECO:0000305" key="3"/>
<reference key="1">
    <citation type="submission" date="2005-08" db="EMBL/GenBank/DDBJ databases">
        <authorList>
            <consortium name="NIH - Mammalian Gene Collection (MGC) project"/>
        </authorList>
    </citation>
    <scope>NUCLEOTIDE SEQUENCE [LARGE SCALE MRNA]</scope>
    <source>
        <strain>Hereford</strain>
        <tissue>Thymus</tissue>
    </source>
</reference>
<proteinExistence type="evidence at transcript level"/>
<keyword id="KW-0007">Acetylation</keyword>
<keyword id="KW-0963">Cytoplasm</keyword>
<keyword id="KW-0443">Lipid metabolism</keyword>
<keyword id="KW-0479">Metal-binding</keyword>
<keyword id="KW-0520">NAD</keyword>
<keyword id="KW-0560">Oxidoreductase</keyword>
<keyword id="KW-0597">Phosphoprotein</keyword>
<keyword id="KW-1185">Reference proteome</keyword>
<keyword id="KW-0862">Zinc</keyword>
<organism>
    <name type="scientific">Bos taurus</name>
    <name type="common">Bovine</name>
    <dbReference type="NCBI Taxonomy" id="9913"/>
    <lineage>
        <taxon>Eukaryota</taxon>
        <taxon>Metazoa</taxon>
        <taxon>Chordata</taxon>
        <taxon>Craniata</taxon>
        <taxon>Vertebrata</taxon>
        <taxon>Euteleostomi</taxon>
        <taxon>Mammalia</taxon>
        <taxon>Eutheria</taxon>
        <taxon>Laurasiatheria</taxon>
        <taxon>Artiodactyla</taxon>
        <taxon>Ruminantia</taxon>
        <taxon>Pecora</taxon>
        <taxon>Bovidae</taxon>
        <taxon>Bovinae</taxon>
        <taxon>Bos</taxon>
    </lineage>
</organism>
<feature type="initiator methionine" description="Removed" evidence="1">
    <location>
        <position position="1"/>
    </location>
</feature>
<feature type="chain" id="PRO_0000282937" description="Alcohol dehydrogenase class-3">
    <location>
        <begin position="2"/>
        <end position="374"/>
    </location>
</feature>
<feature type="binding site" evidence="1">
    <location>
        <position position="45"/>
    </location>
    <ligand>
        <name>Zn(2+)</name>
        <dbReference type="ChEBI" id="CHEBI:29105"/>
        <label>1</label>
        <note>catalytic</note>
    </ligand>
</feature>
<feature type="binding site" evidence="1">
    <location>
        <position position="67"/>
    </location>
    <ligand>
        <name>Zn(2+)</name>
        <dbReference type="ChEBI" id="CHEBI:29105"/>
        <label>1</label>
        <note>catalytic</note>
    </ligand>
</feature>
<feature type="binding site" evidence="1">
    <location>
        <position position="97"/>
    </location>
    <ligand>
        <name>Zn(2+)</name>
        <dbReference type="ChEBI" id="CHEBI:29105"/>
        <label>2</label>
    </ligand>
</feature>
<feature type="binding site" evidence="1">
    <location>
        <position position="100"/>
    </location>
    <ligand>
        <name>Zn(2+)</name>
        <dbReference type="ChEBI" id="CHEBI:29105"/>
        <label>2</label>
    </ligand>
</feature>
<feature type="binding site" evidence="1">
    <location>
        <position position="103"/>
    </location>
    <ligand>
        <name>Zn(2+)</name>
        <dbReference type="ChEBI" id="CHEBI:29105"/>
        <label>2</label>
    </ligand>
</feature>
<feature type="binding site" evidence="1">
    <location>
        <position position="111"/>
    </location>
    <ligand>
        <name>Zn(2+)</name>
        <dbReference type="ChEBI" id="CHEBI:29105"/>
        <label>2</label>
    </ligand>
</feature>
<feature type="binding site" evidence="1">
    <location>
        <position position="174"/>
    </location>
    <ligand>
        <name>Zn(2+)</name>
        <dbReference type="ChEBI" id="CHEBI:29105"/>
        <label>1</label>
        <note>catalytic</note>
    </ligand>
</feature>
<feature type="site" description="Important for FDH activity and activation by fatty acids" evidence="1">
    <location>
        <position position="115"/>
    </location>
</feature>
<feature type="modified residue" description="N-acetylalanine" evidence="1">
    <location>
        <position position="2"/>
    </location>
</feature>
<feature type="modified residue" description="N6-succinyllysine" evidence="2">
    <location>
        <position position="233"/>
    </location>
</feature>
<feature type="modified residue" description="Phosphoserine" evidence="1">
    <location>
        <position position="247"/>
    </location>
</feature>
<feature type="modified residue" description="N6-succinyllysine" evidence="2">
    <location>
        <position position="315"/>
    </location>
</feature>
<feature type="modified residue" description="Phosphoserine" evidence="1">
    <location>
        <position position="324"/>
    </location>
</feature>
<sequence>MANQVIKCKAAVAWEAGKPLSIEEVEVAPPKAHEVRIKIIATAVCHTDAYTLSGADPEGNYPVILGHEGAGIVESVGEGVTKLKAGDTVIPLYIPQCGECKFCLNPKTNLCQKIRVTQGKGLMPDGTSRFTCKGKTILHYMGTSTFSEYTVVADISVAKIDPLAPLDKVCLLGCGISTGYGAALNAAKVEPGSTCAVFGLGGVGLAVIMGCKMAGAARIIGVDINKDKFARAKEFGASECINPQDFSKPIQEVLIEMTDGGVDYSFECIGNVKVMRAALEACHKGWGISVVVGVAASGEEIATRPFQLVTGRTWKGTAFGGWKSVESVPKLVSEYMSKKIKVDEFVTHSLPFDQINEAFDLMHAGKSIRTVVKL</sequence>
<gene>
    <name evidence="1" type="primary">ADH5</name>
</gene>
<protein>
    <recommendedName>
        <fullName evidence="1">Alcohol dehydrogenase class-3</fullName>
        <ecNumber evidence="1">1.1.1.1</ecNumber>
    </recommendedName>
    <alternativeName>
        <fullName>Alcohol dehydrogenase 5</fullName>
    </alternativeName>
    <alternativeName>
        <fullName>Alcohol dehydrogenase class-III</fullName>
    </alternativeName>
    <alternativeName>
        <fullName>Glutathione-dependent formaldehyde dehydrogenase</fullName>
        <shortName>FALDH</shortName>
        <shortName>FDH</shortName>
        <shortName>GSH-FDH</shortName>
        <ecNumber>1.1.1.-</ecNumber>
    </alternativeName>
    <alternativeName>
        <fullName>S-(hydroxymethyl)glutathione dehydrogenase</fullName>
        <ecNumber evidence="1">1.1.1.284</ecNumber>
    </alternativeName>
</protein>